<gene>
    <name evidence="1" type="primary">mnmG</name>
    <name evidence="1" type="synonym">gidA</name>
    <name type="ordered locus">SARI_03776</name>
</gene>
<sequence>MFYPDPFDVIIIGGGHAGTEAAMAAARMGQQTLLLTHNIDTLGQMSCNPAIGGIGKGHLVKEVDALGGLMAAAIDRAGIQFRILNASKGPAVRATRAQADRVLYRQAVRTALENQPNLMLFQQAVEDLIVENDRVVGAVTQMGLKFRAKAVVLTVGTFLDGKIHIGLDNYSGGRAGDPPSIPLSRRLRELPLRVSRLKTGTPPRIDARTIDFSVLAQQHGDNPMPVFSFMGNASQHPQQVPCYITHTNEKTHDVIRNNLDRSPMYAGVIEGIGPRYCPSIEDKVMRFSDRNQHQIFLEPEGLTSNEIYPNGISTSLPFDVQMQIVRSMQGMENAKIVRPGYAIEYDFFDPRDLKPTLESKFIQGLFFAGQINGTTGYEEAAAQGLLAGLNAARLSADKEGWAPARSQAYLGVLVDDLCTLGTKEPYRMFTSRAEYRLMLREDNADLRLTEIGRDLGLVDDERWARFNEKLENIERERQRLKSTWVTPSAEFAADVNAHLTTPLSREASGEDLLRRPEMTYAQLTSLSAFAPALEDEQAAEQVEIQVKYEGYIARQQDEIEKQLRNENTLLPATLDYRLVSGLSNEVIAKLNDHKPASIGQASRISGVTPAAISILLVWLKKQGMLRRSA</sequence>
<reference key="1">
    <citation type="submission" date="2007-11" db="EMBL/GenBank/DDBJ databases">
        <authorList>
            <consortium name="The Salmonella enterica serovar Arizonae Genome Sequencing Project"/>
            <person name="McClelland M."/>
            <person name="Sanderson E.K."/>
            <person name="Porwollik S."/>
            <person name="Spieth J."/>
            <person name="Clifton W.S."/>
            <person name="Fulton R."/>
            <person name="Chunyan W."/>
            <person name="Wollam A."/>
            <person name="Shah N."/>
            <person name="Pepin K."/>
            <person name="Bhonagiri V."/>
            <person name="Nash W."/>
            <person name="Johnson M."/>
            <person name="Thiruvilangam P."/>
            <person name="Wilson R."/>
        </authorList>
    </citation>
    <scope>NUCLEOTIDE SEQUENCE [LARGE SCALE GENOMIC DNA]</scope>
    <source>
        <strain>ATCC BAA-731 / CDC346-86 / RSK2980</strain>
    </source>
</reference>
<organism>
    <name type="scientific">Salmonella arizonae (strain ATCC BAA-731 / CDC346-86 / RSK2980)</name>
    <dbReference type="NCBI Taxonomy" id="41514"/>
    <lineage>
        <taxon>Bacteria</taxon>
        <taxon>Pseudomonadati</taxon>
        <taxon>Pseudomonadota</taxon>
        <taxon>Gammaproteobacteria</taxon>
        <taxon>Enterobacterales</taxon>
        <taxon>Enterobacteriaceae</taxon>
        <taxon>Salmonella</taxon>
    </lineage>
</organism>
<comment type="function">
    <text evidence="1">NAD-binding protein involved in the addition of a carboxymethylaminomethyl (cmnm) group at the wobble position (U34) of certain tRNAs, forming tRNA-cmnm(5)s(2)U34.</text>
</comment>
<comment type="cofactor">
    <cofactor evidence="1">
        <name>FAD</name>
        <dbReference type="ChEBI" id="CHEBI:57692"/>
    </cofactor>
</comment>
<comment type="subunit">
    <text evidence="1">Homodimer. Heterotetramer of two MnmE and two MnmG subunits.</text>
</comment>
<comment type="subcellular location">
    <subcellularLocation>
        <location evidence="1">Cytoplasm</location>
    </subcellularLocation>
</comment>
<comment type="similarity">
    <text evidence="1">Belongs to the MnmG family.</text>
</comment>
<proteinExistence type="inferred from homology"/>
<feature type="chain" id="PRO_1000076328" description="tRNA uridine 5-carboxymethylaminomethyl modification enzyme MnmG">
    <location>
        <begin position="1"/>
        <end position="629"/>
    </location>
</feature>
<feature type="binding site" evidence="1">
    <location>
        <begin position="13"/>
        <end position="18"/>
    </location>
    <ligand>
        <name>FAD</name>
        <dbReference type="ChEBI" id="CHEBI:57692"/>
    </ligand>
</feature>
<feature type="binding site" evidence="1">
    <location>
        <position position="125"/>
    </location>
    <ligand>
        <name>FAD</name>
        <dbReference type="ChEBI" id="CHEBI:57692"/>
    </ligand>
</feature>
<feature type="binding site" evidence="1">
    <location>
        <position position="180"/>
    </location>
    <ligand>
        <name>FAD</name>
        <dbReference type="ChEBI" id="CHEBI:57692"/>
    </ligand>
</feature>
<feature type="binding site" evidence="1">
    <location>
        <begin position="273"/>
        <end position="287"/>
    </location>
    <ligand>
        <name>NAD(+)</name>
        <dbReference type="ChEBI" id="CHEBI:57540"/>
    </ligand>
</feature>
<feature type="binding site" evidence="1">
    <location>
        <position position="370"/>
    </location>
    <ligand>
        <name>FAD</name>
        <dbReference type="ChEBI" id="CHEBI:57692"/>
    </ligand>
</feature>
<keyword id="KW-0963">Cytoplasm</keyword>
<keyword id="KW-0274">FAD</keyword>
<keyword id="KW-0285">Flavoprotein</keyword>
<keyword id="KW-0520">NAD</keyword>
<keyword id="KW-1185">Reference proteome</keyword>
<keyword id="KW-0819">tRNA processing</keyword>
<evidence type="ECO:0000255" key="1">
    <source>
        <dbReference type="HAMAP-Rule" id="MF_00129"/>
    </source>
</evidence>
<accession>A9MJQ9</accession>
<dbReference type="EMBL" id="CP000880">
    <property type="protein sequence ID" value="ABX23570.1"/>
    <property type="molecule type" value="Genomic_DNA"/>
</dbReference>
<dbReference type="SMR" id="A9MJQ9"/>
<dbReference type="STRING" id="41514.SARI_03776"/>
<dbReference type="KEGG" id="ses:SARI_03776"/>
<dbReference type="HOGENOM" id="CLU_007831_2_2_6"/>
<dbReference type="Proteomes" id="UP000002084">
    <property type="component" value="Chromosome"/>
</dbReference>
<dbReference type="GO" id="GO:0005829">
    <property type="term" value="C:cytosol"/>
    <property type="evidence" value="ECO:0007669"/>
    <property type="project" value="TreeGrafter"/>
</dbReference>
<dbReference type="GO" id="GO:0050660">
    <property type="term" value="F:flavin adenine dinucleotide binding"/>
    <property type="evidence" value="ECO:0007669"/>
    <property type="project" value="UniProtKB-UniRule"/>
</dbReference>
<dbReference type="GO" id="GO:0030488">
    <property type="term" value="P:tRNA methylation"/>
    <property type="evidence" value="ECO:0007669"/>
    <property type="project" value="TreeGrafter"/>
</dbReference>
<dbReference type="GO" id="GO:0002098">
    <property type="term" value="P:tRNA wobble uridine modification"/>
    <property type="evidence" value="ECO:0007669"/>
    <property type="project" value="InterPro"/>
</dbReference>
<dbReference type="FunFam" id="1.10.10.1800:FF:000001">
    <property type="entry name" value="tRNA uridine 5-carboxymethylaminomethyl modification enzyme MnmG"/>
    <property type="match status" value="1"/>
</dbReference>
<dbReference type="FunFam" id="1.10.150.570:FF:000001">
    <property type="entry name" value="tRNA uridine 5-carboxymethylaminomethyl modification enzyme MnmG"/>
    <property type="match status" value="1"/>
</dbReference>
<dbReference type="FunFam" id="3.50.50.60:FF:000002">
    <property type="entry name" value="tRNA uridine 5-carboxymethylaminomethyl modification enzyme MnmG"/>
    <property type="match status" value="1"/>
</dbReference>
<dbReference type="FunFam" id="3.50.50.60:FF:000010">
    <property type="entry name" value="tRNA uridine 5-carboxymethylaminomethyl modification enzyme MnmG"/>
    <property type="match status" value="1"/>
</dbReference>
<dbReference type="Gene3D" id="3.50.50.60">
    <property type="entry name" value="FAD/NAD(P)-binding domain"/>
    <property type="match status" value="2"/>
</dbReference>
<dbReference type="Gene3D" id="1.10.150.570">
    <property type="entry name" value="GidA associated domain, C-terminal subdomain"/>
    <property type="match status" value="1"/>
</dbReference>
<dbReference type="Gene3D" id="1.10.10.1800">
    <property type="entry name" value="tRNA uridine 5-carboxymethylaminomethyl modification enzyme MnmG/GidA"/>
    <property type="match status" value="1"/>
</dbReference>
<dbReference type="HAMAP" id="MF_00129">
    <property type="entry name" value="MnmG_GidA"/>
    <property type="match status" value="1"/>
</dbReference>
<dbReference type="InterPro" id="IPR036188">
    <property type="entry name" value="FAD/NAD-bd_sf"/>
</dbReference>
<dbReference type="InterPro" id="IPR049312">
    <property type="entry name" value="GIDA_C_N"/>
</dbReference>
<dbReference type="InterPro" id="IPR004416">
    <property type="entry name" value="MnmG"/>
</dbReference>
<dbReference type="InterPro" id="IPR002218">
    <property type="entry name" value="MnmG-rel"/>
</dbReference>
<dbReference type="InterPro" id="IPR020595">
    <property type="entry name" value="MnmG-rel_CS"/>
</dbReference>
<dbReference type="InterPro" id="IPR026904">
    <property type="entry name" value="MnmG_C"/>
</dbReference>
<dbReference type="InterPro" id="IPR047001">
    <property type="entry name" value="MnmG_C_subdom"/>
</dbReference>
<dbReference type="InterPro" id="IPR044920">
    <property type="entry name" value="MnmG_C_subdom_sf"/>
</dbReference>
<dbReference type="InterPro" id="IPR040131">
    <property type="entry name" value="MnmG_N"/>
</dbReference>
<dbReference type="NCBIfam" id="TIGR00136">
    <property type="entry name" value="mnmG_gidA"/>
    <property type="match status" value="1"/>
</dbReference>
<dbReference type="PANTHER" id="PTHR11806">
    <property type="entry name" value="GLUCOSE INHIBITED DIVISION PROTEIN A"/>
    <property type="match status" value="1"/>
</dbReference>
<dbReference type="PANTHER" id="PTHR11806:SF0">
    <property type="entry name" value="PROTEIN MTO1 HOMOLOG, MITOCHONDRIAL"/>
    <property type="match status" value="1"/>
</dbReference>
<dbReference type="Pfam" id="PF01134">
    <property type="entry name" value="GIDA"/>
    <property type="match status" value="1"/>
</dbReference>
<dbReference type="Pfam" id="PF21680">
    <property type="entry name" value="GIDA_C_1st"/>
    <property type="match status" value="1"/>
</dbReference>
<dbReference type="Pfam" id="PF13932">
    <property type="entry name" value="SAM_GIDA_C"/>
    <property type="match status" value="1"/>
</dbReference>
<dbReference type="SMART" id="SM01228">
    <property type="entry name" value="GIDA_assoc_3"/>
    <property type="match status" value="1"/>
</dbReference>
<dbReference type="SUPFAM" id="SSF51905">
    <property type="entry name" value="FAD/NAD(P)-binding domain"/>
    <property type="match status" value="1"/>
</dbReference>
<dbReference type="PROSITE" id="PS01280">
    <property type="entry name" value="GIDA_1"/>
    <property type="match status" value="1"/>
</dbReference>
<dbReference type="PROSITE" id="PS01281">
    <property type="entry name" value="GIDA_2"/>
    <property type="match status" value="1"/>
</dbReference>
<protein>
    <recommendedName>
        <fullName evidence="1">tRNA uridine 5-carboxymethylaminomethyl modification enzyme MnmG</fullName>
    </recommendedName>
    <alternativeName>
        <fullName evidence="1">Glucose-inhibited division protein A</fullName>
    </alternativeName>
</protein>
<name>MNMG_SALAR</name>